<proteinExistence type="evidence at protein level"/>
<organism>
    <name type="scientific">Bradyrhizobium diazoefficiens (strain JCM 10833 / BCRC 13528 / IAM 13628 / NBRC 14792 / USDA 110)</name>
    <dbReference type="NCBI Taxonomy" id="224911"/>
    <lineage>
        <taxon>Bacteria</taxon>
        <taxon>Pseudomonadati</taxon>
        <taxon>Pseudomonadota</taxon>
        <taxon>Alphaproteobacteria</taxon>
        <taxon>Hyphomicrobiales</taxon>
        <taxon>Nitrobacteraceae</taxon>
        <taxon>Bradyrhizobium</taxon>
    </lineage>
</organism>
<gene>
    <name evidence="1" type="primary">cbbL</name>
    <name type="ordered locus">blr2585</name>
</gene>
<feature type="chain" id="PRO_0000062620" description="Ribulose bisphosphate carboxylase large chain">
    <location>
        <begin position="1"/>
        <end position="486"/>
    </location>
</feature>
<feature type="active site" description="Proton acceptor" evidence="1">
    <location>
        <position position="177"/>
    </location>
</feature>
<feature type="active site" description="Proton acceptor" evidence="1">
    <location>
        <position position="295"/>
    </location>
</feature>
<feature type="binding site" description="in homodimeric partner" evidence="1">
    <location>
        <position position="125"/>
    </location>
    <ligand>
        <name>substrate</name>
    </ligand>
</feature>
<feature type="binding site" evidence="1">
    <location>
        <position position="175"/>
    </location>
    <ligand>
        <name>substrate</name>
    </ligand>
</feature>
<feature type="binding site" evidence="1">
    <location>
        <position position="179"/>
    </location>
    <ligand>
        <name>substrate</name>
    </ligand>
</feature>
<feature type="binding site" description="via carbamate group" evidence="1">
    <location>
        <position position="203"/>
    </location>
    <ligand>
        <name>Mg(2+)</name>
        <dbReference type="ChEBI" id="CHEBI:18420"/>
    </ligand>
</feature>
<feature type="binding site" evidence="1">
    <location>
        <position position="205"/>
    </location>
    <ligand>
        <name>Mg(2+)</name>
        <dbReference type="ChEBI" id="CHEBI:18420"/>
    </ligand>
</feature>
<feature type="binding site" evidence="1">
    <location>
        <position position="206"/>
    </location>
    <ligand>
        <name>Mg(2+)</name>
        <dbReference type="ChEBI" id="CHEBI:18420"/>
    </ligand>
</feature>
<feature type="binding site" evidence="1">
    <location>
        <position position="296"/>
    </location>
    <ligand>
        <name>substrate</name>
    </ligand>
</feature>
<feature type="binding site" evidence="1">
    <location>
        <position position="328"/>
    </location>
    <ligand>
        <name>substrate</name>
    </ligand>
</feature>
<feature type="binding site" evidence="1">
    <location>
        <position position="380"/>
    </location>
    <ligand>
        <name>substrate</name>
    </ligand>
</feature>
<feature type="site" description="Transition state stabilizer" evidence="1">
    <location>
        <position position="335"/>
    </location>
</feature>
<feature type="modified residue" description="N6-carboxylysine" evidence="1">
    <location>
        <position position="203"/>
    </location>
</feature>
<feature type="sequence conflict" description="In Ref. 1; AAN61148/BAC47850." evidence="3" ref="1">
    <original>H</original>
    <variation>Y</variation>
    <location>
        <position position="87"/>
    </location>
</feature>
<protein>
    <recommendedName>
        <fullName evidence="1">Ribulose bisphosphate carboxylase large chain</fullName>
        <shortName evidence="1">RuBisCO large subunit</shortName>
        <ecNumber evidence="1 2">4.1.1.39</ecNumber>
    </recommendedName>
</protein>
<name>RBL_BRADU</name>
<keyword id="KW-0113">Calvin cycle</keyword>
<keyword id="KW-0120">Carbon dioxide fixation</keyword>
<keyword id="KW-0456">Lyase</keyword>
<keyword id="KW-0460">Magnesium</keyword>
<keyword id="KW-0479">Metal-binding</keyword>
<keyword id="KW-0503">Monooxygenase</keyword>
<keyword id="KW-0560">Oxidoreductase</keyword>
<keyword id="KW-1185">Reference proteome</keyword>
<dbReference type="EC" id="4.1.1.39" evidence="1 2"/>
<dbReference type="EMBL" id="AF041820">
    <property type="protein sequence ID" value="AAD05386.1"/>
    <property type="molecule type" value="Genomic_DNA"/>
</dbReference>
<dbReference type="EMBL" id="AY150332">
    <property type="protein sequence ID" value="AAN61148.1"/>
    <property type="molecule type" value="Genomic_DNA"/>
</dbReference>
<dbReference type="EMBL" id="BA000040">
    <property type="protein sequence ID" value="BAC47850.1"/>
    <property type="molecule type" value="Genomic_DNA"/>
</dbReference>
<dbReference type="RefSeq" id="NP_769225.1">
    <property type="nucleotide sequence ID" value="NC_004463.1"/>
</dbReference>
<dbReference type="RefSeq" id="WP_011085371.1">
    <property type="nucleotide sequence ID" value="NZ_CP011360.1"/>
</dbReference>
<dbReference type="SMR" id="Q9ZI34"/>
<dbReference type="STRING" id="224911.AAV28_09885"/>
<dbReference type="EnsemblBacteria" id="BAC47850">
    <property type="protein sequence ID" value="BAC47850"/>
    <property type="gene ID" value="BAC47850"/>
</dbReference>
<dbReference type="KEGG" id="bja:blr2585"/>
<dbReference type="PATRIC" id="fig|224911.5.peg.2551"/>
<dbReference type="eggNOG" id="COG1850">
    <property type="taxonomic scope" value="Bacteria"/>
</dbReference>
<dbReference type="HOGENOM" id="CLU_031450_2_0_5"/>
<dbReference type="InParanoid" id="Q9ZI34"/>
<dbReference type="OrthoDB" id="9764279at2"/>
<dbReference type="SABIO-RK" id="Q9ZI34"/>
<dbReference type="Proteomes" id="UP000002526">
    <property type="component" value="Chromosome"/>
</dbReference>
<dbReference type="GO" id="GO:0000287">
    <property type="term" value="F:magnesium ion binding"/>
    <property type="evidence" value="ECO:0007669"/>
    <property type="project" value="UniProtKB-UniRule"/>
</dbReference>
<dbReference type="GO" id="GO:0004497">
    <property type="term" value="F:monooxygenase activity"/>
    <property type="evidence" value="ECO:0007669"/>
    <property type="project" value="UniProtKB-KW"/>
</dbReference>
<dbReference type="GO" id="GO:0016984">
    <property type="term" value="F:ribulose-bisphosphate carboxylase activity"/>
    <property type="evidence" value="ECO:0007669"/>
    <property type="project" value="UniProtKB-UniRule"/>
</dbReference>
<dbReference type="GO" id="GO:0019253">
    <property type="term" value="P:reductive pentose-phosphate cycle"/>
    <property type="evidence" value="ECO:0007669"/>
    <property type="project" value="UniProtKB-UniRule"/>
</dbReference>
<dbReference type="CDD" id="cd08212">
    <property type="entry name" value="RuBisCO_large_I"/>
    <property type="match status" value="1"/>
</dbReference>
<dbReference type="Gene3D" id="3.20.20.110">
    <property type="entry name" value="Ribulose bisphosphate carboxylase, large subunit, C-terminal domain"/>
    <property type="match status" value="1"/>
</dbReference>
<dbReference type="Gene3D" id="3.30.70.150">
    <property type="entry name" value="RuBisCO large subunit, N-terminal domain"/>
    <property type="match status" value="1"/>
</dbReference>
<dbReference type="HAMAP" id="MF_01338">
    <property type="entry name" value="RuBisCO_L_type1"/>
    <property type="match status" value="1"/>
</dbReference>
<dbReference type="InterPro" id="IPR033966">
    <property type="entry name" value="RuBisCO"/>
</dbReference>
<dbReference type="InterPro" id="IPR020878">
    <property type="entry name" value="RuBisCo_large_chain_AS"/>
</dbReference>
<dbReference type="InterPro" id="IPR000685">
    <property type="entry name" value="RuBisCO_lsu_C"/>
</dbReference>
<dbReference type="InterPro" id="IPR036376">
    <property type="entry name" value="RuBisCO_lsu_C_sf"/>
</dbReference>
<dbReference type="InterPro" id="IPR017443">
    <property type="entry name" value="RuBisCO_lsu_fd_N"/>
</dbReference>
<dbReference type="InterPro" id="IPR036422">
    <property type="entry name" value="RuBisCO_lsu_N_sf"/>
</dbReference>
<dbReference type="InterPro" id="IPR020888">
    <property type="entry name" value="RuBisCO_lsuI"/>
</dbReference>
<dbReference type="NCBIfam" id="NF003252">
    <property type="entry name" value="PRK04208.1"/>
    <property type="match status" value="1"/>
</dbReference>
<dbReference type="PANTHER" id="PTHR42704">
    <property type="entry name" value="RIBULOSE BISPHOSPHATE CARBOXYLASE"/>
    <property type="match status" value="1"/>
</dbReference>
<dbReference type="PANTHER" id="PTHR42704:SF17">
    <property type="entry name" value="RIBULOSE BISPHOSPHATE CARBOXYLASE LARGE CHAIN"/>
    <property type="match status" value="1"/>
</dbReference>
<dbReference type="Pfam" id="PF00016">
    <property type="entry name" value="RuBisCO_large"/>
    <property type="match status" value="1"/>
</dbReference>
<dbReference type="Pfam" id="PF02788">
    <property type="entry name" value="RuBisCO_large_N"/>
    <property type="match status" value="1"/>
</dbReference>
<dbReference type="SFLD" id="SFLDG01052">
    <property type="entry name" value="RuBisCO"/>
    <property type="match status" value="1"/>
</dbReference>
<dbReference type="SFLD" id="SFLDS00014">
    <property type="entry name" value="RuBisCO"/>
    <property type="match status" value="1"/>
</dbReference>
<dbReference type="SFLD" id="SFLDG00301">
    <property type="entry name" value="RuBisCO-like_proteins"/>
    <property type="match status" value="1"/>
</dbReference>
<dbReference type="SUPFAM" id="SSF51649">
    <property type="entry name" value="RuBisCo, C-terminal domain"/>
    <property type="match status" value="1"/>
</dbReference>
<dbReference type="SUPFAM" id="SSF54966">
    <property type="entry name" value="RuBisCO, large subunit, small (N-terminal) domain"/>
    <property type="match status" value="1"/>
</dbReference>
<dbReference type="PROSITE" id="PS00157">
    <property type="entry name" value="RUBISCO_LARGE"/>
    <property type="match status" value="1"/>
</dbReference>
<reference key="1">
    <citation type="journal article" date="1999" name="Arch. Biochem. Biophys.">
        <title>Closely related form I ribulose bisphosphate carboxylase/oxygenase molecules that possess different CO2/O2 substrate specificities.</title>
        <authorList>
            <person name="Horken K.M."/>
            <person name="Tabita F.R."/>
        </authorList>
    </citation>
    <scope>NUCLEOTIDE SEQUENCE [GENOMIC DNA]</scope>
    <scope>FUNCTION</scope>
    <scope>CATALYTIC ACTIVITY</scope>
    <scope>BIOPHYSICOCHEMICAL PROPERTIES</scope>
    <source>
        <strain>BJ110</strain>
    </source>
</reference>
<reference key="2">
    <citation type="submission" date="2002-09" db="EMBL/GenBank/DDBJ databases">
        <title>The Bradyrhizobium japonicum cbb locus.</title>
        <authorList>
            <person name="Fischer H.-M."/>
            <person name="Bauer E."/>
            <person name="Hennecke H."/>
        </authorList>
    </citation>
    <scope>NUCLEOTIDE SEQUENCE [GENOMIC DNA]</scope>
</reference>
<reference key="3">
    <citation type="journal article" date="2002" name="DNA Res.">
        <title>Complete genomic sequence of nitrogen-fixing symbiotic bacterium Bradyrhizobium japonicum USDA110.</title>
        <authorList>
            <person name="Kaneko T."/>
            <person name="Nakamura Y."/>
            <person name="Sato S."/>
            <person name="Minamisawa K."/>
            <person name="Uchiumi T."/>
            <person name="Sasamoto S."/>
            <person name="Watanabe A."/>
            <person name="Idesawa K."/>
            <person name="Iriguchi M."/>
            <person name="Kawashima K."/>
            <person name="Kohara M."/>
            <person name="Matsumoto M."/>
            <person name="Shimpo S."/>
            <person name="Tsuruoka H."/>
            <person name="Wada T."/>
            <person name="Yamada M."/>
            <person name="Tabata S."/>
        </authorList>
    </citation>
    <scope>NUCLEOTIDE SEQUENCE [LARGE SCALE GENOMIC DNA]</scope>
    <source>
        <strain>JCM 10833 / BCRC 13528 / IAM 13628 / NBRC 14792 / USDA 110</strain>
    </source>
</reference>
<evidence type="ECO:0000255" key="1">
    <source>
        <dbReference type="HAMAP-Rule" id="MF_01338"/>
    </source>
</evidence>
<evidence type="ECO:0000269" key="2">
    <source>
    </source>
</evidence>
<evidence type="ECO:0000305" key="3"/>
<evidence type="ECO:0000305" key="4">
    <source>
    </source>
</evidence>
<sequence length="486" mass="53818">MNAHTGTVRGKERYRSGVMEYKRMGYWEPDYTPKDTDVIALFRVTPQEGVDPIEASAAVAGESSTATWTVVWTDRLTAAEKYRAKCHRVDPVPGTPGSYFAYIAYDLDLFEPGSIANLSASIIGNVFGFKPLKALRLEDMRFPVAYVKTFQGPATGIVVERERLDKFGRPLLGATVKPKLGLSGRNYGRVVYEALKGGLDFTKDDENINSQPFMHWRDRFLYCIEAVNRAQAASGEVKGTYLNITAGTMEDMYERAEFAKELGSCIVMIDLVIGYTAIQSMAKWARRNDMILHLHRAGHSTYTRQKSHGVSFRVIAKWMRLAGVDHIHAGTVVGKLEGDPNTTRGYYDVCREDFNPTKLEHGLFFDQSWASLNKMMPVASGGIHAGQMHQLLDLLGEDVVLQFGGGTIGHPMGIAAGAIANRVALEAMILARNEGRDYVHEGPEILAKAAQTCTPLKSALEVWKDVTFNYQSTDTPDFVPTALETV</sequence>
<comment type="function">
    <text evidence="2">RuBisCO catalyzes two reactions: the carboxylation of D-ribulose 1,5-bisphosphate, the primary event in carbon dioxide fixation, as well as the oxidative fragmentation of the pentose substrate. Both reactions occur simultaneously and in competition at the same active site.</text>
</comment>
<comment type="catalytic activity">
    <reaction evidence="1 2">
        <text>2 (2R)-3-phosphoglycerate + 2 H(+) = D-ribulose 1,5-bisphosphate + CO2 + H2O</text>
        <dbReference type="Rhea" id="RHEA:23124"/>
        <dbReference type="ChEBI" id="CHEBI:15377"/>
        <dbReference type="ChEBI" id="CHEBI:15378"/>
        <dbReference type="ChEBI" id="CHEBI:16526"/>
        <dbReference type="ChEBI" id="CHEBI:57870"/>
        <dbReference type="ChEBI" id="CHEBI:58272"/>
        <dbReference type="EC" id="4.1.1.39"/>
    </reaction>
</comment>
<comment type="catalytic activity">
    <reaction evidence="1 2">
        <text>D-ribulose 1,5-bisphosphate + O2 = 2-phosphoglycolate + (2R)-3-phosphoglycerate + 2 H(+)</text>
        <dbReference type="Rhea" id="RHEA:36631"/>
        <dbReference type="ChEBI" id="CHEBI:15378"/>
        <dbReference type="ChEBI" id="CHEBI:15379"/>
        <dbReference type="ChEBI" id="CHEBI:57870"/>
        <dbReference type="ChEBI" id="CHEBI:58033"/>
        <dbReference type="ChEBI" id="CHEBI:58272"/>
    </reaction>
</comment>
<comment type="cofactor">
    <cofactor evidence="1">
        <name>Mg(2+)</name>
        <dbReference type="ChEBI" id="CHEBI:18420"/>
    </cofactor>
    <text evidence="1">Binds 1 Mg(2+) ion per subunit.</text>
</comment>
<comment type="biophysicochemical properties">
    <kinetics>
        <KM evidence="2">55 uM for ribulose 1,5-bisphosphate</KM>
        <KM evidence="2">66 uM for CO(2)</KM>
        <Vmax evidence="2">2.8 umol/min/mg enzyme with CO(2) as substrate</Vmax>
        <text>The CO(2)/O(2) specificity factor (tau) is 75.</text>
    </kinetics>
</comment>
<comment type="subunit">
    <text evidence="1 4">Heterohexadecamer of 8 large chains and 8 small chains.</text>
</comment>
<comment type="miscellaneous">
    <text evidence="1">The basic functional RuBisCO is composed of a large chain homodimer in a 'head-to-tail' conformation. In form I RuBisCO this homodimer is arranged in a barrel-like tetramer with the small subunits forming a tetrameric 'cap' on each end of the 'barrel'.</text>
</comment>
<comment type="similarity">
    <text evidence="1">Belongs to the RuBisCO large chain family. Type I subfamily.</text>
</comment>
<accession>Q9ZI34</accession>
<accession>Q79UA8</accession>
<accession>Q8GKR7</accession>